<keyword id="KW-0539">Nucleus</keyword>
<keyword id="KW-0804">Transcription</keyword>
<keyword id="KW-0805">Transcription regulation</keyword>
<proteinExistence type="inferred from homology"/>
<gene>
    <name evidence="2" type="primary">TRI10</name>
</gene>
<comment type="function">
    <text evidence="1">Transcriptional activator of all of the trichothecene biosynthesis genes. Acts upstream of the cluster-encoded transcription factor TRI6 and is necessary for full expression of both the other trichothecene genes and the genes for the primary metabolic pathway that precedes the trichothecene biosynthetic pathway.</text>
</comment>
<comment type="subcellular location">
    <subcellularLocation>
        <location evidence="3">Nucleus</location>
    </subcellularLocation>
</comment>
<comment type="similarity">
    <text evidence="3">Belongs to the TRI10 transcription regulator family.</text>
</comment>
<name>TRI10_TRIAR</name>
<reference key="1">
    <citation type="journal article" date="2011" name="Appl. Environ. Microbiol.">
        <title>Identification of loci and functional characterization of trichothecene biosynthesis genes in filamentous fungi of the genus Trichoderma.</title>
        <authorList>
            <person name="Cardoza R.E."/>
            <person name="Malmierca M.G."/>
            <person name="Hermosa M.R."/>
            <person name="Alexander N.J."/>
            <person name="McCormick S.P."/>
            <person name="Proctor R.H."/>
            <person name="Tijerino A.M."/>
            <person name="Rumbero A."/>
            <person name="Monte E."/>
            <person name="Gutierrez S."/>
        </authorList>
    </citation>
    <scope>NUCLEOTIDE SEQUENCE [GENOMIC DNA]</scope>
    <scope>IDENTIFICATION</scope>
    <source>
        <strain>IBT 40837</strain>
    </source>
</reference>
<dbReference type="EMBL" id="FN394494">
    <property type="protein sequence ID" value="CAY87360.1"/>
    <property type="molecule type" value="Genomic_DNA"/>
</dbReference>
<dbReference type="OrthoDB" id="5213892at2759"/>
<dbReference type="GO" id="GO:0005634">
    <property type="term" value="C:nucleus"/>
    <property type="evidence" value="ECO:0007669"/>
    <property type="project" value="UniProtKB-SubCell"/>
</dbReference>
<dbReference type="GO" id="GO:0003700">
    <property type="term" value="F:DNA-binding transcription factor activity"/>
    <property type="evidence" value="ECO:0007669"/>
    <property type="project" value="TreeGrafter"/>
</dbReference>
<dbReference type="GO" id="GO:0000976">
    <property type="term" value="F:transcription cis-regulatory region binding"/>
    <property type="evidence" value="ECO:0007669"/>
    <property type="project" value="TreeGrafter"/>
</dbReference>
<dbReference type="GO" id="GO:0045944">
    <property type="term" value="P:positive regulation of transcription by RNA polymerase II"/>
    <property type="evidence" value="ECO:0007669"/>
    <property type="project" value="TreeGrafter"/>
</dbReference>
<dbReference type="InterPro" id="IPR021858">
    <property type="entry name" value="Fun_TF"/>
</dbReference>
<dbReference type="PANTHER" id="PTHR37534:SF26">
    <property type="entry name" value="TRANSCRIPTION FACTOR, PUTATIVE-RELATED"/>
    <property type="match status" value="1"/>
</dbReference>
<dbReference type="PANTHER" id="PTHR37534">
    <property type="entry name" value="TRANSCRIPTIONAL ACTIVATOR PROTEIN UGA3"/>
    <property type="match status" value="1"/>
</dbReference>
<dbReference type="Pfam" id="PF11951">
    <property type="entry name" value="Fungal_trans_2"/>
    <property type="match status" value="1"/>
</dbReference>
<sequence>MILPKRTQEKEISLLMHYLDEVFPLQFPFHERRYVGKREWLLTILASTRPVYYATLSLSLLHKEACLHEFEAELAEIWQKEKMRYYILALQESQQQLDALDTAYGIAKMKGNIHALASTLQLISFESSSLSKGDWQLHLRAGTSLIPVLIDGWAVALKSDKVASSSSLWTELDASDFNATHDEDSLSYEYVGALKFFANVLAMFGIFSCISIGPSSPFMEYRFLMDQAGLIQMDQIMGCRNWAMLAILEIGTLDKWKREEQENRRLSLKALTSRAMAIEGVLESGLREASGSALVDLITSIYATSALTYLHTVVSGLNPNLSEVQESVAATIVLLKRLPDLRAAKSLVWPLGVTGCMASRSQEDFFRGLIISAGATPRALRNCWGLMKVWEDTWKMREYMSKQPPERWEEVVSGQGPPMLLM</sequence>
<organism>
    <name type="scientific">Trichoderma arundinaceum</name>
    <dbReference type="NCBI Taxonomy" id="490622"/>
    <lineage>
        <taxon>Eukaryota</taxon>
        <taxon>Fungi</taxon>
        <taxon>Dikarya</taxon>
        <taxon>Ascomycota</taxon>
        <taxon>Pezizomycotina</taxon>
        <taxon>Sordariomycetes</taxon>
        <taxon>Hypocreomycetidae</taxon>
        <taxon>Hypocreales</taxon>
        <taxon>Hypocreaceae</taxon>
        <taxon>Trichoderma</taxon>
    </lineage>
</organism>
<protein>
    <recommendedName>
        <fullName evidence="2">Trichothecene biosynthesis transcription regulator TRI10</fullName>
    </recommendedName>
    <alternativeName>
        <fullName evidence="2">Trichothecene biosynthesis protein 10</fullName>
    </alternativeName>
</protein>
<accession>G0KYB0</accession>
<evidence type="ECO:0000250" key="1">
    <source>
        <dbReference type="UniProtKB" id="Q9C1B5"/>
    </source>
</evidence>
<evidence type="ECO:0000303" key="2">
    <source>
    </source>
</evidence>
<evidence type="ECO:0000305" key="3"/>
<feature type="chain" id="PRO_0000445612" description="Trichothecene biosynthesis transcription regulator TRI10">
    <location>
        <begin position="1"/>
        <end position="422"/>
    </location>
</feature>